<name>DNAJ_CAMJD</name>
<accession>A7H2C0</accession>
<protein>
    <recommendedName>
        <fullName evidence="1">Chaperone protein DnaJ</fullName>
    </recommendedName>
</protein>
<proteinExistence type="inferred from homology"/>
<gene>
    <name evidence="1" type="primary">dnaJ</name>
    <name type="ordered locus">JJD26997_0465</name>
</gene>
<keyword id="KW-0143">Chaperone</keyword>
<keyword id="KW-0963">Cytoplasm</keyword>
<keyword id="KW-0235">DNA replication</keyword>
<keyword id="KW-0479">Metal-binding</keyword>
<keyword id="KW-0677">Repeat</keyword>
<keyword id="KW-0346">Stress response</keyword>
<keyword id="KW-0862">Zinc</keyword>
<keyword id="KW-0863">Zinc-finger</keyword>
<feature type="chain" id="PRO_1000085169" description="Chaperone protein DnaJ">
    <location>
        <begin position="1"/>
        <end position="374"/>
    </location>
</feature>
<feature type="domain" description="J" evidence="1">
    <location>
        <begin position="4"/>
        <end position="69"/>
    </location>
</feature>
<feature type="repeat" description="CXXCXGXG motif">
    <location>
        <begin position="149"/>
        <end position="156"/>
    </location>
</feature>
<feature type="repeat" description="CXXCXGXG motif">
    <location>
        <begin position="165"/>
        <end position="172"/>
    </location>
</feature>
<feature type="repeat" description="CXXCXGXG motif">
    <location>
        <begin position="187"/>
        <end position="194"/>
    </location>
</feature>
<feature type="repeat" description="CXXCXGXG motif">
    <location>
        <begin position="201"/>
        <end position="208"/>
    </location>
</feature>
<feature type="zinc finger region" description="CR-type" evidence="1">
    <location>
        <begin position="136"/>
        <end position="213"/>
    </location>
</feature>
<feature type="binding site" evidence="1">
    <location>
        <position position="149"/>
    </location>
    <ligand>
        <name>Zn(2+)</name>
        <dbReference type="ChEBI" id="CHEBI:29105"/>
        <label>1</label>
    </ligand>
</feature>
<feature type="binding site" evidence="1">
    <location>
        <position position="152"/>
    </location>
    <ligand>
        <name>Zn(2+)</name>
        <dbReference type="ChEBI" id="CHEBI:29105"/>
        <label>1</label>
    </ligand>
</feature>
<feature type="binding site" evidence="1">
    <location>
        <position position="165"/>
    </location>
    <ligand>
        <name>Zn(2+)</name>
        <dbReference type="ChEBI" id="CHEBI:29105"/>
        <label>2</label>
    </ligand>
</feature>
<feature type="binding site" evidence="1">
    <location>
        <position position="168"/>
    </location>
    <ligand>
        <name>Zn(2+)</name>
        <dbReference type="ChEBI" id="CHEBI:29105"/>
        <label>2</label>
    </ligand>
</feature>
<feature type="binding site" evidence="1">
    <location>
        <position position="187"/>
    </location>
    <ligand>
        <name>Zn(2+)</name>
        <dbReference type="ChEBI" id="CHEBI:29105"/>
        <label>2</label>
    </ligand>
</feature>
<feature type="binding site" evidence="1">
    <location>
        <position position="190"/>
    </location>
    <ligand>
        <name>Zn(2+)</name>
        <dbReference type="ChEBI" id="CHEBI:29105"/>
        <label>2</label>
    </ligand>
</feature>
<feature type="binding site" evidence="1">
    <location>
        <position position="201"/>
    </location>
    <ligand>
        <name>Zn(2+)</name>
        <dbReference type="ChEBI" id="CHEBI:29105"/>
        <label>1</label>
    </ligand>
</feature>
<feature type="binding site" evidence="1">
    <location>
        <position position="204"/>
    </location>
    <ligand>
        <name>Zn(2+)</name>
        <dbReference type="ChEBI" id="CHEBI:29105"/>
        <label>1</label>
    </ligand>
</feature>
<evidence type="ECO:0000255" key="1">
    <source>
        <dbReference type="HAMAP-Rule" id="MF_01152"/>
    </source>
</evidence>
<comment type="function">
    <text evidence="1">Participates actively in the response to hyperosmotic and heat shock by preventing the aggregation of stress-denatured proteins and by disaggregating proteins, also in an autonomous, DnaK-independent fashion. Unfolded proteins bind initially to DnaJ; upon interaction with the DnaJ-bound protein, DnaK hydrolyzes its bound ATP, resulting in the formation of a stable complex. GrpE releases ADP from DnaK; ATP binding to DnaK triggers the release of the substrate protein, thus completing the reaction cycle. Several rounds of ATP-dependent interactions between DnaJ, DnaK and GrpE are required for fully efficient folding. Also involved, together with DnaK and GrpE, in the DNA replication of plasmids through activation of initiation proteins.</text>
</comment>
<comment type="cofactor">
    <cofactor evidence="1">
        <name>Zn(2+)</name>
        <dbReference type="ChEBI" id="CHEBI:29105"/>
    </cofactor>
    <text evidence="1">Binds 2 Zn(2+) ions per monomer.</text>
</comment>
<comment type="subunit">
    <text evidence="1">Homodimer.</text>
</comment>
<comment type="subcellular location">
    <subcellularLocation>
        <location evidence="1">Cytoplasm</location>
    </subcellularLocation>
</comment>
<comment type="domain">
    <text evidence="1">The J domain is necessary and sufficient to stimulate DnaK ATPase activity. Zinc center 1 plays an important role in the autonomous, DnaK-independent chaperone activity of DnaJ. Zinc center 2 is essential for interaction with DnaK and for DnaJ activity.</text>
</comment>
<comment type="similarity">
    <text evidence="1">Belongs to the DnaJ family.</text>
</comment>
<reference key="1">
    <citation type="submission" date="2007-07" db="EMBL/GenBank/DDBJ databases">
        <title>Complete genome sequence of Campylobacter jejuni subsp doylei 269.97 isolated from human blood.</title>
        <authorList>
            <person name="Fouts D.E."/>
            <person name="Mongodin E.F."/>
            <person name="Puiu D."/>
            <person name="Sebastian Y."/>
            <person name="Miller W.G."/>
            <person name="Mandrell R.E."/>
            <person name="Lastovica A.J."/>
            <person name="Nelson K.E."/>
        </authorList>
    </citation>
    <scope>NUCLEOTIDE SEQUENCE [LARGE SCALE GENOMIC DNA]</scope>
    <source>
        <strain>ATCC BAA-1458 / RM4099 / 269.97</strain>
    </source>
</reference>
<dbReference type="EMBL" id="CP000768">
    <property type="protein sequence ID" value="ABS44353.1"/>
    <property type="molecule type" value="Genomic_DNA"/>
</dbReference>
<dbReference type="SMR" id="A7H2C0"/>
<dbReference type="KEGG" id="cjd:JJD26997_0465"/>
<dbReference type="HOGENOM" id="CLU_017633_0_7_7"/>
<dbReference type="Proteomes" id="UP000002302">
    <property type="component" value="Chromosome"/>
</dbReference>
<dbReference type="GO" id="GO:0005737">
    <property type="term" value="C:cytoplasm"/>
    <property type="evidence" value="ECO:0007669"/>
    <property type="project" value="UniProtKB-SubCell"/>
</dbReference>
<dbReference type="GO" id="GO:0005524">
    <property type="term" value="F:ATP binding"/>
    <property type="evidence" value="ECO:0007669"/>
    <property type="project" value="InterPro"/>
</dbReference>
<dbReference type="GO" id="GO:0031072">
    <property type="term" value="F:heat shock protein binding"/>
    <property type="evidence" value="ECO:0007669"/>
    <property type="project" value="InterPro"/>
</dbReference>
<dbReference type="GO" id="GO:0051082">
    <property type="term" value="F:unfolded protein binding"/>
    <property type="evidence" value="ECO:0007669"/>
    <property type="project" value="UniProtKB-UniRule"/>
</dbReference>
<dbReference type="GO" id="GO:0008270">
    <property type="term" value="F:zinc ion binding"/>
    <property type="evidence" value="ECO:0007669"/>
    <property type="project" value="UniProtKB-UniRule"/>
</dbReference>
<dbReference type="GO" id="GO:0051085">
    <property type="term" value="P:chaperone cofactor-dependent protein refolding"/>
    <property type="evidence" value="ECO:0007669"/>
    <property type="project" value="TreeGrafter"/>
</dbReference>
<dbReference type="GO" id="GO:0006260">
    <property type="term" value="P:DNA replication"/>
    <property type="evidence" value="ECO:0007669"/>
    <property type="project" value="UniProtKB-KW"/>
</dbReference>
<dbReference type="GO" id="GO:0042026">
    <property type="term" value="P:protein refolding"/>
    <property type="evidence" value="ECO:0007669"/>
    <property type="project" value="TreeGrafter"/>
</dbReference>
<dbReference type="GO" id="GO:0009408">
    <property type="term" value="P:response to heat"/>
    <property type="evidence" value="ECO:0007669"/>
    <property type="project" value="InterPro"/>
</dbReference>
<dbReference type="CDD" id="cd06257">
    <property type="entry name" value="DnaJ"/>
    <property type="match status" value="1"/>
</dbReference>
<dbReference type="CDD" id="cd10747">
    <property type="entry name" value="DnaJ_C"/>
    <property type="match status" value="1"/>
</dbReference>
<dbReference type="CDD" id="cd10719">
    <property type="entry name" value="DnaJ_zf"/>
    <property type="match status" value="1"/>
</dbReference>
<dbReference type="FunFam" id="1.10.287.110:FF:000034">
    <property type="entry name" value="Chaperone protein DnaJ"/>
    <property type="match status" value="1"/>
</dbReference>
<dbReference type="FunFam" id="2.60.260.20:FF:000055">
    <property type="entry name" value="Chaperone protein DnaJ"/>
    <property type="match status" value="1"/>
</dbReference>
<dbReference type="FunFam" id="2.10.230.10:FF:000002">
    <property type="entry name" value="Molecular chaperone DnaJ"/>
    <property type="match status" value="1"/>
</dbReference>
<dbReference type="Gene3D" id="1.10.287.110">
    <property type="entry name" value="DnaJ domain"/>
    <property type="match status" value="1"/>
</dbReference>
<dbReference type="Gene3D" id="2.10.230.10">
    <property type="entry name" value="Heat shock protein DnaJ, cysteine-rich domain"/>
    <property type="match status" value="1"/>
</dbReference>
<dbReference type="Gene3D" id="2.60.260.20">
    <property type="entry name" value="Urease metallochaperone UreE, N-terminal domain"/>
    <property type="match status" value="2"/>
</dbReference>
<dbReference type="HAMAP" id="MF_01152">
    <property type="entry name" value="DnaJ"/>
    <property type="match status" value="1"/>
</dbReference>
<dbReference type="InterPro" id="IPR012724">
    <property type="entry name" value="DnaJ"/>
</dbReference>
<dbReference type="InterPro" id="IPR002939">
    <property type="entry name" value="DnaJ_C"/>
</dbReference>
<dbReference type="InterPro" id="IPR001623">
    <property type="entry name" value="DnaJ_domain"/>
</dbReference>
<dbReference type="InterPro" id="IPR018253">
    <property type="entry name" value="DnaJ_domain_CS"/>
</dbReference>
<dbReference type="InterPro" id="IPR008971">
    <property type="entry name" value="HSP40/DnaJ_pept-bd"/>
</dbReference>
<dbReference type="InterPro" id="IPR001305">
    <property type="entry name" value="HSP_DnaJ_Cys-rich_dom"/>
</dbReference>
<dbReference type="InterPro" id="IPR036410">
    <property type="entry name" value="HSP_DnaJ_Cys-rich_dom_sf"/>
</dbReference>
<dbReference type="InterPro" id="IPR036869">
    <property type="entry name" value="J_dom_sf"/>
</dbReference>
<dbReference type="NCBIfam" id="TIGR02349">
    <property type="entry name" value="DnaJ_bact"/>
    <property type="match status" value="1"/>
</dbReference>
<dbReference type="NCBIfam" id="NF008035">
    <property type="entry name" value="PRK10767.1"/>
    <property type="match status" value="1"/>
</dbReference>
<dbReference type="PANTHER" id="PTHR43096:SF48">
    <property type="entry name" value="CHAPERONE PROTEIN DNAJ"/>
    <property type="match status" value="1"/>
</dbReference>
<dbReference type="PANTHER" id="PTHR43096">
    <property type="entry name" value="DNAJ HOMOLOG 1, MITOCHONDRIAL-RELATED"/>
    <property type="match status" value="1"/>
</dbReference>
<dbReference type="Pfam" id="PF00226">
    <property type="entry name" value="DnaJ"/>
    <property type="match status" value="1"/>
</dbReference>
<dbReference type="Pfam" id="PF01556">
    <property type="entry name" value="DnaJ_C"/>
    <property type="match status" value="1"/>
</dbReference>
<dbReference type="Pfam" id="PF00684">
    <property type="entry name" value="DnaJ_CXXCXGXG"/>
    <property type="match status" value="1"/>
</dbReference>
<dbReference type="PRINTS" id="PR00625">
    <property type="entry name" value="JDOMAIN"/>
</dbReference>
<dbReference type="SMART" id="SM00271">
    <property type="entry name" value="DnaJ"/>
    <property type="match status" value="1"/>
</dbReference>
<dbReference type="SUPFAM" id="SSF46565">
    <property type="entry name" value="Chaperone J-domain"/>
    <property type="match status" value="1"/>
</dbReference>
<dbReference type="SUPFAM" id="SSF57938">
    <property type="entry name" value="DnaJ/Hsp40 cysteine-rich domain"/>
    <property type="match status" value="1"/>
</dbReference>
<dbReference type="SUPFAM" id="SSF49493">
    <property type="entry name" value="HSP40/DnaJ peptide-binding domain"/>
    <property type="match status" value="2"/>
</dbReference>
<dbReference type="PROSITE" id="PS00636">
    <property type="entry name" value="DNAJ_1"/>
    <property type="match status" value="1"/>
</dbReference>
<dbReference type="PROSITE" id="PS50076">
    <property type="entry name" value="DNAJ_2"/>
    <property type="match status" value="1"/>
</dbReference>
<dbReference type="PROSITE" id="PS51188">
    <property type="entry name" value="ZF_CR"/>
    <property type="match status" value="1"/>
</dbReference>
<sequence length="374" mass="41752">MEISYYEILEITQNADKETIKKAYRKMALKYHPDRNQGDKEAEDKFKLVNEAYEVLSNDEKRAIYDRYGKDALKGGGFGSNSSGFGGFEDLGDIFSSFFGESFGSSSRRRKSSNDEKIPSDFIFNLKLSFKEAVFGCKKNIDFTYKCSCKTCNGTGAKDGKLQTCPKCQGRGQVGVSQGFITFAQTCPDCQGSGEKASEKCNDCKGLGYNESKDSVELNIPEGVDTGMKLRVNAKGNILKNNTRGDMYVKIIAAEDDTFIRDDDDIYIEFPVFFTQAILGQSIKVPTIRGEVTLNLPKGAKDGQRFVLEKEGVKDVHSSRIGNQIVQISIKFPTSLNDEQKELLEKLSESFGIKDGMHQEQKGLFEKIANWFKS</sequence>
<organism>
    <name type="scientific">Campylobacter jejuni subsp. doylei (strain ATCC BAA-1458 / RM4099 / 269.97)</name>
    <dbReference type="NCBI Taxonomy" id="360109"/>
    <lineage>
        <taxon>Bacteria</taxon>
        <taxon>Pseudomonadati</taxon>
        <taxon>Campylobacterota</taxon>
        <taxon>Epsilonproteobacteria</taxon>
        <taxon>Campylobacterales</taxon>
        <taxon>Campylobacteraceae</taxon>
        <taxon>Campylobacter</taxon>
    </lineage>
</organism>